<dbReference type="EMBL" id="GQ489206">
    <property type="protein sequence ID" value="ADB12633.1"/>
    <property type="molecule type" value="mRNA"/>
</dbReference>
<dbReference type="EMBL" id="AB028993">
    <property type="protein sequence ID" value="BAA83022.2"/>
    <property type="status" value="ALT_INIT"/>
    <property type="molecule type" value="mRNA"/>
</dbReference>
<dbReference type="EMBL" id="AC008082">
    <property type="status" value="NOT_ANNOTATED_CDS"/>
    <property type="molecule type" value="Genomic_DNA"/>
</dbReference>
<dbReference type="EMBL" id="AC008120">
    <property type="status" value="NOT_ANNOTATED_CDS"/>
    <property type="molecule type" value="Genomic_DNA"/>
</dbReference>
<dbReference type="EMBL" id="AC092923">
    <property type="status" value="NOT_ANNOTATED_CDS"/>
    <property type="molecule type" value="Genomic_DNA"/>
</dbReference>
<dbReference type="EMBL" id="AC092967">
    <property type="status" value="NOT_ANNOTATED_CDS"/>
    <property type="molecule type" value="Genomic_DNA"/>
</dbReference>
<dbReference type="EMBL" id="AC110871">
    <property type="status" value="NOT_ANNOTATED_CDS"/>
    <property type="molecule type" value="Genomic_DNA"/>
</dbReference>
<dbReference type="EMBL" id="AC131158">
    <property type="status" value="NOT_ANNOTATED_CDS"/>
    <property type="molecule type" value="Genomic_DNA"/>
</dbReference>
<dbReference type="EMBL" id="BC032555">
    <property type="protein sequence ID" value="AAH32555.1"/>
    <property type="molecule type" value="mRNA"/>
</dbReference>
<dbReference type="EMBL" id="AK074522">
    <property type="protein sequence ID" value="BAC11039.1"/>
    <property type="status" value="ALT_INIT"/>
    <property type="molecule type" value="mRNA"/>
</dbReference>
<dbReference type="CCDS" id="CCDS3222.1">
    <molecule id="Q8N2Q7-2"/>
</dbReference>
<dbReference type="RefSeq" id="NP_001352858.1">
    <molecule id="Q8N2Q7-2"/>
    <property type="nucleotide sequence ID" value="NM_001365929.2"/>
</dbReference>
<dbReference type="RefSeq" id="NP_001352859.1">
    <molecule id="Q8N2Q7-2"/>
    <property type="nucleotide sequence ID" value="NM_001365930.2"/>
</dbReference>
<dbReference type="RefSeq" id="NP_001352860.1">
    <molecule id="Q8N2Q7-2"/>
    <property type="nucleotide sequence ID" value="NM_001365931.2"/>
</dbReference>
<dbReference type="RefSeq" id="NP_001352861.1">
    <molecule id="Q8N2Q7-2"/>
    <property type="nucleotide sequence ID" value="NM_001365932.2"/>
</dbReference>
<dbReference type="RefSeq" id="NP_001352862.1">
    <molecule id="Q8N2Q7-2"/>
    <property type="nucleotide sequence ID" value="NM_001365933.2"/>
</dbReference>
<dbReference type="RefSeq" id="NP_055747.1">
    <molecule id="Q8N2Q7-2"/>
    <property type="nucleotide sequence ID" value="NM_014932.5"/>
</dbReference>
<dbReference type="RefSeq" id="XP_005247291.1">
    <property type="nucleotide sequence ID" value="XM_005247234.2"/>
</dbReference>
<dbReference type="RefSeq" id="XP_005247292.1">
    <property type="nucleotide sequence ID" value="XM_005247235.3"/>
</dbReference>
<dbReference type="RefSeq" id="XP_016861387.1">
    <property type="nucleotide sequence ID" value="XM_017005898.1"/>
</dbReference>
<dbReference type="RefSeq" id="XP_016861388.1">
    <property type="nucleotide sequence ID" value="XM_017005899.1"/>
</dbReference>
<dbReference type="RefSeq" id="XP_016861389.1">
    <molecule id="Q8N2Q7-2"/>
    <property type="nucleotide sequence ID" value="XM_017005900.2"/>
</dbReference>
<dbReference type="RefSeq" id="XP_016861390.1">
    <property type="nucleotide sequence ID" value="XM_017005901.1"/>
</dbReference>
<dbReference type="RefSeq" id="XP_047303664.1">
    <molecule id="Q8N2Q7-2"/>
    <property type="nucleotide sequence ID" value="XM_047447708.1"/>
</dbReference>
<dbReference type="RefSeq" id="XP_054201661.1">
    <molecule id="Q8N2Q7-2"/>
    <property type="nucleotide sequence ID" value="XM_054345686.1"/>
</dbReference>
<dbReference type="RefSeq" id="XP_054201662.1">
    <molecule id="Q8N2Q7-2"/>
    <property type="nucleotide sequence ID" value="XM_054345687.1"/>
</dbReference>
<dbReference type="PDB" id="5OJ6">
    <property type="method" value="X-ray"/>
    <property type="resolution" value="3.30 A"/>
    <property type="chains" value="A=51-656"/>
</dbReference>
<dbReference type="PDB" id="5OJK">
    <property type="method" value="X-ray"/>
    <property type="resolution" value="2.55 A"/>
    <property type="chains" value="A/B=51-654"/>
</dbReference>
<dbReference type="PDBsum" id="5OJ6"/>
<dbReference type="PDBsum" id="5OJK"/>
<dbReference type="SMR" id="Q8N2Q7"/>
<dbReference type="BioGRID" id="116538">
    <property type="interactions" value="19"/>
</dbReference>
<dbReference type="ComplexPortal" id="CPX-4101">
    <property type="entry name" value="NLGN1(+SSA+SSB) - NRXN1-beta(-SS4) complex"/>
</dbReference>
<dbReference type="ComplexPortal" id="CPX-909">
    <property type="entry name" value="NLGN1(-SSA-SSB) - NRXN1-beta(-SS4) complex"/>
</dbReference>
<dbReference type="CORUM" id="Q8N2Q7"/>
<dbReference type="FunCoup" id="Q8N2Q7">
    <property type="interactions" value="469"/>
</dbReference>
<dbReference type="IntAct" id="Q8N2Q7">
    <property type="interactions" value="17"/>
</dbReference>
<dbReference type="MINT" id="Q8N2Q7"/>
<dbReference type="STRING" id="9606.ENSP00000392500"/>
<dbReference type="ESTHER" id="human-NLGN1">
    <property type="family name" value="Neuroligin"/>
</dbReference>
<dbReference type="MEROPS" id="S09.994"/>
<dbReference type="TCDB" id="8.A.117.1.2">
    <property type="family name" value="the neuroligin (nlg) family"/>
</dbReference>
<dbReference type="GlyCosmos" id="Q8N2Q7">
    <property type="glycosylation" value="6 sites, No reported glycans"/>
</dbReference>
<dbReference type="GlyGen" id="Q8N2Q7">
    <property type="glycosylation" value="10 sites, 1 N-linked glycan (1 site), 1 O-linked glycan (4 sites)"/>
</dbReference>
<dbReference type="iPTMnet" id="Q8N2Q7"/>
<dbReference type="PhosphoSitePlus" id="Q8N2Q7"/>
<dbReference type="BioMuta" id="NLGN1"/>
<dbReference type="DMDM" id="31076822"/>
<dbReference type="jPOST" id="Q8N2Q7"/>
<dbReference type="MassIVE" id="Q8N2Q7"/>
<dbReference type="PaxDb" id="9606-ENSP00000392500"/>
<dbReference type="PeptideAtlas" id="Q8N2Q7"/>
<dbReference type="ProteomicsDB" id="71726">
    <molecule id="Q8N2Q7-2"/>
</dbReference>
<dbReference type="Pumba" id="Q8N2Q7"/>
<dbReference type="Antibodypedia" id="1513">
    <property type="antibodies" value="280 antibodies from 35 providers"/>
</dbReference>
<dbReference type="DNASU" id="22871"/>
<dbReference type="Ensembl" id="ENST00000361589.8">
    <molecule id="Q8N2Q7-2"/>
    <property type="protein sequence ID" value="ENSP00000354541.4"/>
    <property type="gene ID" value="ENSG00000169760.18"/>
</dbReference>
<dbReference type="Ensembl" id="ENST00000415045.2">
    <molecule id="Q8N2Q7-3"/>
    <property type="protein sequence ID" value="ENSP00000410374.2"/>
    <property type="gene ID" value="ENSG00000169760.18"/>
</dbReference>
<dbReference type="Ensembl" id="ENST00000457714.5">
    <molecule id="Q8N2Q7-2"/>
    <property type="protein sequence ID" value="ENSP00000392500.1"/>
    <property type="gene ID" value="ENSG00000169760.18"/>
</dbReference>
<dbReference type="GeneID" id="22871"/>
<dbReference type="KEGG" id="hsa:22871"/>
<dbReference type="UCSC" id="uc003fio.3">
    <molecule id="Q8N2Q7-3"/>
    <property type="organism name" value="human"/>
</dbReference>
<dbReference type="AGR" id="HGNC:14291"/>
<dbReference type="CTD" id="22871"/>
<dbReference type="DisGeNET" id="22871"/>
<dbReference type="GeneCards" id="NLGN1"/>
<dbReference type="HGNC" id="HGNC:14291">
    <property type="gene designation" value="NLGN1"/>
</dbReference>
<dbReference type="HPA" id="ENSG00000169760">
    <property type="expression patterns" value="Tissue enhanced (brain, retina)"/>
</dbReference>
<dbReference type="MalaCards" id="NLGN1"/>
<dbReference type="MIM" id="600568">
    <property type="type" value="gene"/>
</dbReference>
<dbReference type="MIM" id="618830">
    <property type="type" value="phenotype"/>
</dbReference>
<dbReference type="neXtProt" id="NX_Q8N2Q7"/>
<dbReference type="OpenTargets" id="ENSG00000169760"/>
<dbReference type="PharmGKB" id="PA31647"/>
<dbReference type="VEuPathDB" id="HostDB:ENSG00000169760"/>
<dbReference type="eggNOG" id="KOG1516">
    <property type="taxonomic scope" value="Eukaryota"/>
</dbReference>
<dbReference type="GeneTree" id="ENSGT00940000155789"/>
<dbReference type="InParanoid" id="Q8N2Q7"/>
<dbReference type="OMA" id="SLHPHDM"/>
<dbReference type="OrthoDB" id="408631at2759"/>
<dbReference type="PAN-GO" id="Q8N2Q7">
    <property type="GO annotations" value="11 GO annotations based on evolutionary models"/>
</dbReference>
<dbReference type="PhylomeDB" id="Q8N2Q7"/>
<dbReference type="TreeFam" id="TF326187"/>
<dbReference type="PathwayCommons" id="Q8N2Q7"/>
<dbReference type="Reactome" id="R-HSA-6794361">
    <property type="pathway name" value="Neurexins and neuroligins"/>
</dbReference>
<dbReference type="SignaLink" id="Q8N2Q7"/>
<dbReference type="SIGNOR" id="Q8N2Q7"/>
<dbReference type="BioGRID-ORCS" id="22871">
    <property type="hits" value="7 hits in 1152 CRISPR screens"/>
</dbReference>
<dbReference type="ChiTaRS" id="NLGN1">
    <property type="organism name" value="human"/>
</dbReference>
<dbReference type="GeneWiki" id="NLGN1"/>
<dbReference type="GenomeRNAi" id="22871"/>
<dbReference type="Pharos" id="Q8N2Q7">
    <property type="development level" value="Tbio"/>
</dbReference>
<dbReference type="PRO" id="PR:Q8N2Q7"/>
<dbReference type="Proteomes" id="UP000005640">
    <property type="component" value="Chromosome 3"/>
</dbReference>
<dbReference type="RNAct" id="Q8N2Q7">
    <property type="molecule type" value="protein"/>
</dbReference>
<dbReference type="Bgee" id="ENSG00000169760">
    <property type="expression patterns" value="Expressed in cortical plate and 150 other cell types or tissues"/>
</dbReference>
<dbReference type="ExpressionAtlas" id="Q8N2Q7">
    <property type="expression patterns" value="baseline and differential"/>
</dbReference>
<dbReference type="GO" id="GO:0098985">
    <property type="term" value="C:asymmetric, glutamatergic, excitatory synapse"/>
    <property type="evidence" value="ECO:0000304"/>
    <property type="project" value="ARUK-UCL"/>
</dbReference>
<dbReference type="GO" id="GO:0009986">
    <property type="term" value="C:cell surface"/>
    <property type="evidence" value="ECO:0000250"/>
    <property type="project" value="BHF-UCL"/>
</dbReference>
<dbReference type="GO" id="GO:0030425">
    <property type="term" value="C:dendrite"/>
    <property type="evidence" value="ECO:0000250"/>
    <property type="project" value="BHF-UCL"/>
</dbReference>
<dbReference type="GO" id="GO:0043197">
    <property type="term" value="C:dendritic spine"/>
    <property type="evidence" value="ECO:0000250"/>
    <property type="project" value="BHF-UCL"/>
</dbReference>
<dbReference type="GO" id="GO:0060076">
    <property type="term" value="C:excitatory synapse"/>
    <property type="evidence" value="ECO:0000303"/>
    <property type="project" value="ARUK-UCL"/>
</dbReference>
<dbReference type="GO" id="GO:0032433">
    <property type="term" value="C:filopodium tip"/>
    <property type="evidence" value="ECO:0000250"/>
    <property type="project" value="BHF-UCL"/>
</dbReference>
<dbReference type="GO" id="GO:0098982">
    <property type="term" value="C:GABA-ergic synapse"/>
    <property type="evidence" value="ECO:0000303"/>
    <property type="project" value="ComplexPortal"/>
</dbReference>
<dbReference type="GO" id="GO:0098978">
    <property type="term" value="C:glutamatergic synapse"/>
    <property type="evidence" value="ECO:0000303"/>
    <property type="project" value="ComplexPortal"/>
</dbReference>
<dbReference type="GO" id="GO:0005794">
    <property type="term" value="C:Golgi apparatus"/>
    <property type="evidence" value="ECO:0000250"/>
    <property type="project" value="BHF-UCL"/>
</dbReference>
<dbReference type="GO" id="GO:0016020">
    <property type="term" value="C:membrane"/>
    <property type="evidence" value="ECO:0000304"/>
    <property type="project" value="ARUK-UCL"/>
</dbReference>
<dbReference type="GO" id="GO:0031594">
    <property type="term" value="C:neuromuscular junction"/>
    <property type="evidence" value="ECO:0000303"/>
    <property type="project" value="ComplexPortal"/>
</dbReference>
<dbReference type="GO" id="GO:0005886">
    <property type="term" value="C:plasma membrane"/>
    <property type="evidence" value="ECO:0000315"/>
    <property type="project" value="UniProtKB"/>
</dbReference>
<dbReference type="GO" id="GO:0098794">
    <property type="term" value="C:postsynapse"/>
    <property type="evidence" value="ECO:0000303"/>
    <property type="project" value="ARUK-UCL"/>
</dbReference>
<dbReference type="GO" id="GO:0014069">
    <property type="term" value="C:postsynaptic density"/>
    <property type="evidence" value="ECO:0000304"/>
    <property type="project" value="BHF-UCL"/>
</dbReference>
<dbReference type="GO" id="GO:0045211">
    <property type="term" value="C:postsynaptic membrane"/>
    <property type="evidence" value="ECO:0000304"/>
    <property type="project" value="BHF-UCL"/>
</dbReference>
<dbReference type="GO" id="GO:0099634">
    <property type="term" value="C:postsynaptic specialization membrane"/>
    <property type="evidence" value="ECO:0000250"/>
    <property type="project" value="BHF-UCL"/>
</dbReference>
<dbReference type="GO" id="GO:0098793">
    <property type="term" value="C:presynapse"/>
    <property type="evidence" value="ECO:0007669"/>
    <property type="project" value="GOC"/>
</dbReference>
<dbReference type="GO" id="GO:0098635">
    <property type="term" value="C:protein complex involved in cell-cell adhesion"/>
    <property type="evidence" value="ECO:0000266"/>
    <property type="project" value="ComplexPortal"/>
</dbReference>
<dbReference type="GO" id="GO:0043235">
    <property type="term" value="C:receptor complex"/>
    <property type="evidence" value="ECO:0000250"/>
    <property type="project" value="BHF-UCL"/>
</dbReference>
<dbReference type="GO" id="GO:0045202">
    <property type="term" value="C:synapse"/>
    <property type="evidence" value="ECO:0000250"/>
    <property type="project" value="UniProtKB"/>
</dbReference>
<dbReference type="GO" id="GO:0043083">
    <property type="term" value="C:synaptic cleft"/>
    <property type="evidence" value="ECO:0007669"/>
    <property type="project" value="UniProtKB-SubCell"/>
</dbReference>
<dbReference type="GO" id="GO:0001540">
    <property type="term" value="F:amyloid-beta binding"/>
    <property type="evidence" value="ECO:0000303"/>
    <property type="project" value="ARUK-UCL"/>
</dbReference>
<dbReference type="GO" id="GO:0050839">
    <property type="term" value="F:cell adhesion molecule binding"/>
    <property type="evidence" value="ECO:0000250"/>
    <property type="project" value="BHF-UCL"/>
</dbReference>
<dbReference type="GO" id="GO:0042802">
    <property type="term" value="F:identical protein binding"/>
    <property type="evidence" value="ECO:0000250"/>
    <property type="project" value="BHF-UCL"/>
</dbReference>
<dbReference type="GO" id="GO:0042043">
    <property type="term" value="F:neurexin family protein binding"/>
    <property type="evidence" value="ECO:0000250"/>
    <property type="project" value="UniProtKB"/>
</dbReference>
<dbReference type="GO" id="GO:0030165">
    <property type="term" value="F:PDZ domain binding"/>
    <property type="evidence" value="ECO:0000314"/>
    <property type="project" value="UniProtKB"/>
</dbReference>
<dbReference type="GO" id="GO:0097110">
    <property type="term" value="F:scaffold protein binding"/>
    <property type="evidence" value="ECO:0000314"/>
    <property type="project" value="BHF-UCL"/>
</dbReference>
<dbReference type="GO" id="GO:0038023">
    <property type="term" value="F:signaling receptor activity"/>
    <property type="evidence" value="ECO:0000250"/>
    <property type="project" value="BHF-UCL"/>
</dbReference>
<dbReference type="GO" id="GO:0097113">
    <property type="term" value="P:AMPA glutamate receptor clustering"/>
    <property type="evidence" value="ECO:0000250"/>
    <property type="project" value="BHF-UCL"/>
</dbReference>
<dbReference type="GO" id="GO:0098990">
    <property type="term" value="P:AMPA selective glutamate receptor signaling pathway"/>
    <property type="evidence" value="ECO:0000250"/>
    <property type="project" value="BHF-UCL"/>
</dbReference>
<dbReference type="GO" id="GO:0016339">
    <property type="term" value="P:calcium-dependent cell-cell adhesion via plasma membrane cell adhesion molecules"/>
    <property type="evidence" value="ECO:0000250"/>
    <property type="project" value="UniProtKB"/>
</dbReference>
<dbReference type="GO" id="GO:0071277">
    <property type="term" value="P:cellular response to calcium ion"/>
    <property type="evidence" value="ECO:0000250"/>
    <property type="project" value="ARUK-UCL"/>
</dbReference>
<dbReference type="GO" id="GO:0048789">
    <property type="term" value="P:cytoskeletal matrix organization at active zone"/>
    <property type="evidence" value="ECO:0000250"/>
    <property type="project" value="BHF-UCL"/>
</dbReference>
<dbReference type="GO" id="GO:0045184">
    <property type="term" value="P:establishment of protein localization"/>
    <property type="evidence" value="ECO:0000250"/>
    <property type="project" value="BHF-UCL"/>
</dbReference>
<dbReference type="GO" id="GO:1904861">
    <property type="term" value="P:excitatory synapse assembly"/>
    <property type="evidence" value="ECO:0000250"/>
    <property type="project" value="ARUK-UCL"/>
</dbReference>
<dbReference type="GO" id="GO:0007157">
    <property type="term" value="P:heterophilic cell-cell adhesion via plasma membrane cell adhesion molecules"/>
    <property type="evidence" value="ECO:0000250"/>
    <property type="project" value="BHF-UCL"/>
</dbReference>
<dbReference type="GO" id="GO:0050804">
    <property type="term" value="P:modulation of chemical synaptic transmission"/>
    <property type="evidence" value="ECO:0000250"/>
    <property type="project" value="ARUK-UCL"/>
</dbReference>
<dbReference type="GO" id="GO:0061002">
    <property type="term" value="P:negative regulation of dendritic spine morphogenesis"/>
    <property type="evidence" value="ECO:0000316"/>
    <property type="project" value="BHF-UCL"/>
</dbReference>
<dbReference type="GO" id="GO:0007399">
    <property type="term" value="P:nervous system development"/>
    <property type="evidence" value="ECO:0000315"/>
    <property type="project" value="UniProtKB"/>
</dbReference>
<dbReference type="GO" id="GO:0097115">
    <property type="term" value="P:neurexin clustering involved in presynaptic membrane assembly"/>
    <property type="evidence" value="ECO:0000250"/>
    <property type="project" value="BHF-UCL"/>
</dbReference>
<dbReference type="GO" id="GO:0007158">
    <property type="term" value="P:neuron cell-cell adhesion"/>
    <property type="evidence" value="ECO:0000250"/>
    <property type="project" value="BHF-UCL"/>
</dbReference>
<dbReference type="GO" id="GO:0140058">
    <property type="term" value="P:neuron projection arborization"/>
    <property type="evidence" value="ECO:0000250"/>
    <property type="project" value="ARUK-UCL"/>
</dbReference>
<dbReference type="GO" id="GO:0031175">
    <property type="term" value="P:neuron projection development"/>
    <property type="evidence" value="ECO:0000314"/>
    <property type="project" value="CACAO"/>
</dbReference>
<dbReference type="GO" id="GO:0048812">
    <property type="term" value="P:neuron projection morphogenesis"/>
    <property type="evidence" value="ECO:0000303"/>
    <property type="project" value="ComplexPortal"/>
</dbReference>
<dbReference type="GO" id="GO:0023041">
    <property type="term" value="P:neuronal signal transduction"/>
    <property type="evidence" value="ECO:0000304"/>
    <property type="project" value="BHF-UCL"/>
</dbReference>
<dbReference type="GO" id="GO:0097114">
    <property type="term" value="P:NMDA glutamate receptor clustering"/>
    <property type="evidence" value="ECO:0000316"/>
    <property type="project" value="BHF-UCL"/>
</dbReference>
<dbReference type="GO" id="GO:0098989">
    <property type="term" value="P:NMDA selective glutamate receptor signaling pathway"/>
    <property type="evidence" value="ECO:0000250"/>
    <property type="project" value="ARUK-UCL"/>
</dbReference>
<dbReference type="GO" id="GO:0010841">
    <property type="term" value="P:positive regulation of circadian sleep/wake cycle, wakefulness"/>
    <property type="evidence" value="ECO:0000250"/>
    <property type="project" value="UniProtKB"/>
</dbReference>
<dbReference type="GO" id="GO:0060999">
    <property type="term" value="P:positive regulation of dendritic spine development"/>
    <property type="evidence" value="ECO:0000316"/>
    <property type="project" value="BHF-UCL"/>
</dbReference>
<dbReference type="GO" id="GO:2000463">
    <property type="term" value="P:positive regulation of excitatory postsynaptic potential"/>
    <property type="evidence" value="ECO:0000316"/>
    <property type="project" value="BHF-UCL"/>
</dbReference>
<dbReference type="GO" id="GO:0051491">
    <property type="term" value="P:positive regulation of filopodium assembly"/>
    <property type="evidence" value="ECO:0000250"/>
    <property type="project" value="BHF-UCL"/>
</dbReference>
<dbReference type="GO" id="GO:1902533">
    <property type="term" value="P:positive regulation of intracellular signal transduction"/>
    <property type="evidence" value="ECO:0000250"/>
    <property type="project" value="BHF-UCL"/>
</dbReference>
<dbReference type="GO" id="GO:1900075">
    <property type="term" value="P:positive regulation of neuromuscular synaptic transmission"/>
    <property type="evidence" value="ECO:0000303"/>
    <property type="project" value="ComplexPortal"/>
</dbReference>
<dbReference type="GO" id="GO:1900029">
    <property type="term" value="P:positive regulation of ruffle assembly"/>
    <property type="evidence" value="ECO:0000250"/>
    <property type="project" value="BHF-UCL"/>
</dbReference>
<dbReference type="GO" id="GO:0051965">
    <property type="term" value="P:positive regulation of synapse assembly"/>
    <property type="evidence" value="ECO:0000314"/>
    <property type="project" value="MGI"/>
</dbReference>
<dbReference type="GO" id="GO:0032230">
    <property type="term" value="P:positive regulation of synaptic transmission, GABAergic"/>
    <property type="evidence" value="ECO:0000250"/>
    <property type="project" value="BHF-UCL"/>
</dbReference>
<dbReference type="GO" id="GO:0051968">
    <property type="term" value="P:positive regulation of synaptic transmission, glutamatergic"/>
    <property type="evidence" value="ECO:0000250"/>
    <property type="project" value="BHF-UCL"/>
</dbReference>
<dbReference type="GO" id="GO:1900244">
    <property type="term" value="P:positive regulation of synaptic vesicle endocytosis"/>
    <property type="evidence" value="ECO:0000250"/>
    <property type="project" value="BHF-UCL"/>
</dbReference>
<dbReference type="GO" id="GO:2000302">
    <property type="term" value="P:positive regulation of synaptic vesicle exocytosis"/>
    <property type="evidence" value="ECO:0000250"/>
    <property type="project" value="BHF-UCL"/>
</dbReference>
<dbReference type="GO" id="GO:0097119">
    <property type="term" value="P:postsynaptic density protein 95 clustering"/>
    <property type="evidence" value="ECO:0000250"/>
    <property type="project" value="BHF-UCL"/>
</dbReference>
<dbReference type="GO" id="GO:0097104">
    <property type="term" value="P:postsynaptic membrane assembly"/>
    <property type="evidence" value="ECO:0000250"/>
    <property type="project" value="BHF-UCL"/>
</dbReference>
<dbReference type="GO" id="GO:0099054">
    <property type="term" value="P:presynapse assembly"/>
    <property type="evidence" value="ECO:0000304"/>
    <property type="project" value="ARUK-UCL"/>
</dbReference>
<dbReference type="GO" id="GO:0097105">
    <property type="term" value="P:presynaptic membrane assembly"/>
    <property type="evidence" value="ECO:0000250"/>
    <property type="project" value="BHF-UCL"/>
</dbReference>
<dbReference type="GO" id="GO:0035418">
    <property type="term" value="P:protein localization to synapse"/>
    <property type="evidence" value="ECO:0000250"/>
    <property type="project" value="BHF-UCL"/>
</dbReference>
<dbReference type="GO" id="GO:0006605">
    <property type="term" value="P:protein targeting"/>
    <property type="evidence" value="ECO:0000250"/>
    <property type="project" value="UniProtKB"/>
</dbReference>
<dbReference type="GO" id="GO:0097120">
    <property type="term" value="P:receptor localization to synapse"/>
    <property type="evidence" value="ECO:0000250"/>
    <property type="project" value="BHF-UCL"/>
</dbReference>
<dbReference type="GO" id="GO:0045664">
    <property type="term" value="P:regulation of neuron differentiation"/>
    <property type="evidence" value="ECO:0000250"/>
    <property type="project" value="UniProtKB"/>
</dbReference>
<dbReference type="GO" id="GO:0048511">
    <property type="term" value="P:rhythmic process"/>
    <property type="evidence" value="ECO:0007669"/>
    <property type="project" value="UniProtKB-KW"/>
</dbReference>
<dbReference type="GO" id="GO:0007416">
    <property type="term" value="P:synapse assembly"/>
    <property type="evidence" value="ECO:0000250"/>
    <property type="project" value="UniProtKB"/>
</dbReference>
<dbReference type="GO" id="GO:0097091">
    <property type="term" value="P:synaptic vesicle clustering"/>
    <property type="evidence" value="ECO:0000250"/>
    <property type="project" value="BHF-UCL"/>
</dbReference>
<dbReference type="GO" id="GO:0016080">
    <property type="term" value="P:synaptic vesicle targeting"/>
    <property type="evidence" value="ECO:0000250"/>
    <property type="project" value="UniProtKB"/>
</dbReference>
<dbReference type="GO" id="GO:0072553">
    <property type="term" value="P:terminal button organization"/>
    <property type="evidence" value="ECO:0000250"/>
    <property type="project" value="BHF-UCL"/>
</dbReference>
<dbReference type="FunFam" id="3.40.50.1820:FF:000001">
    <property type="entry name" value="Neuroligin 3 isoform"/>
    <property type="match status" value="1"/>
</dbReference>
<dbReference type="Gene3D" id="3.40.50.1820">
    <property type="entry name" value="alpha/beta hydrolase"/>
    <property type="match status" value="1"/>
</dbReference>
<dbReference type="InterPro" id="IPR029058">
    <property type="entry name" value="AB_hydrolase_fold"/>
</dbReference>
<dbReference type="InterPro" id="IPR002018">
    <property type="entry name" value="CarbesteraseB"/>
</dbReference>
<dbReference type="InterPro" id="IPR019819">
    <property type="entry name" value="Carboxylesterase_B_CS"/>
</dbReference>
<dbReference type="InterPro" id="IPR051093">
    <property type="entry name" value="Neuroligin/BSAL"/>
</dbReference>
<dbReference type="InterPro" id="IPR000460">
    <property type="entry name" value="Nlgn"/>
</dbReference>
<dbReference type="PANTHER" id="PTHR43903">
    <property type="entry name" value="NEUROLIGIN"/>
    <property type="match status" value="1"/>
</dbReference>
<dbReference type="Pfam" id="PF00135">
    <property type="entry name" value="COesterase"/>
    <property type="match status" value="1"/>
</dbReference>
<dbReference type="PRINTS" id="PR01090">
    <property type="entry name" value="NEUROLIGIN"/>
</dbReference>
<dbReference type="SUPFAM" id="SSF53474">
    <property type="entry name" value="alpha/beta-Hydrolases"/>
    <property type="match status" value="1"/>
</dbReference>
<dbReference type="PROSITE" id="PS00941">
    <property type="entry name" value="CARBOXYLESTERASE_B_2"/>
    <property type="match status" value="1"/>
</dbReference>
<evidence type="ECO:0000250" key="1"/>
<evidence type="ECO:0000250" key="2">
    <source>
        <dbReference type="UniProtKB" id="Q62765"/>
    </source>
</evidence>
<evidence type="ECO:0000250" key="3">
    <source>
        <dbReference type="UniProtKB" id="Q99K10"/>
    </source>
</evidence>
<evidence type="ECO:0000255" key="4"/>
<evidence type="ECO:0000256" key="5">
    <source>
        <dbReference type="SAM" id="MobiDB-lite"/>
    </source>
</evidence>
<evidence type="ECO:0000269" key="6">
    <source>
    </source>
</evidence>
<evidence type="ECO:0000269" key="7">
    <source>
    </source>
</evidence>
<evidence type="ECO:0000269" key="8">
    <source>
    </source>
</evidence>
<evidence type="ECO:0000269" key="9">
    <source>
    </source>
</evidence>
<evidence type="ECO:0000269" key="10">
    <source>
    </source>
</evidence>
<evidence type="ECO:0000269" key="11">
    <source>
    </source>
</evidence>
<evidence type="ECO:0000305" key="12"/>
<evidence type="ECO:0007829" key="13">
    <source>
        <dbReference type="PDB" id="5OJ6"/>
    </source>
</evidence>
<evidence type="ECO:0007829" key="14">
    <source>
        <dbReference type="PDB" id="5OJK"/>
    </source>
</evidence>
<comment type="function">
    <text evidence="3 9">Cell surface protein involved in cell-cell-interactions via its interactions with neurexin family members. Plays a role in synapse function and synaptic signal transmission, and probably mediates its effects by recruiting and clustering other synaptic proteins. May promote the initial formation of synapses, but is not essential for this. In vitro, triggers the de novo formation of presynaptic structures. May be involved in specification of excitatory synapses. Required to maintain wakefulness quality and normal synchrony of cerebral cortex activity during wakefulness and sleep (By similarity). The protein is involved in nervous system development.</text>
</comment>
<comment type="subunit">
    <text evidence="2 3 6 11">Interacts with neurexins NRXN1, NRXN2 and NRXN3 (By similarity). Interaction with neurexins is mediated by heparan sulfate glycan modification on neurexin (By similarity). Interacts with NLGN3. Interacts with AIP1 and PDZRN3 (By similarity). Interacts (via its C-terminus) with DLG4/PSD-95 (via PDZ domain 3). Interacts with GOPC.</text>
</comment>
<comment type="subcellular location">
    <subcellularLocation>
        <location evidence="9">Cell membrane</location>
        <topology evidence="2">Single-pass type I membrane protein</topology>
    </subcellularLocation>
    <subcellularLocation>
        <location evidence="2">Postsynaptic density</location>
    </subcellularLocation>
    <subcellularLocation>
        <location evidence="2">Synaptic cleft</location>
    </subcellularLocation>
    <subcellularLocation>
        <location evidence="2">Synaptic cell membrane</location>
    </subcellularLocation>
    <text evidence="2">Enriched in synaptic plasma membranes and clustered in synaptic clefts and postsynaptic densities. Colocalized with DLG4/PSD-95 and GRIN1/NMDAR1.</text>
</comment>
<comment type="alternative products">
    <event type="alternative splicing"/>
    <isoform>
        <id>Q8N2Q7-3</id>
        <name>1</name>
        <sequence type="displayed"/>
    </isoform>
    <isoform>
        <id>Q8N2Q7-2</id>
        <name>2</name>
        <sequence type="described" ref="VSP_060231"/>
    </isoform>
</comment>
<comment type="tissue specificity">
    <text evidence="7 8 9">Expressed in the blood vessel walls (at protein level). Highly expressed in brain through prenatal stages, and at lower levels in pancreas islet beta cells.</text>
</comment>
<comment type="disease" evidence="9">
    <disease id="DI-05821">
        <name>Autism 20</name>
        <acronym>AUTS20</acronym>
        <description>A complex multifactorial, pervasive developmental disorder characterized by impairments in reciprocal social interaction and communication, restricted and stereotyped patterns of interests and activities, and the presence of developmental abnormalities by 3 years of age. Most individuals with autism also manifest moderate intellectual disability. The transmission pattern of AUTS20 is consistent with autosomal dominant inheritance.</description>
        <dbReference type="MIM" id="618830"/>
    </disease>
    <text>Disease susceptibility is associated with variants affecting the gene represented in this entry.</text>
</comment>
<comment type="similarity">
    <text evidence="12">Belongs to the type-B carboxylesterase/lipase family.</text>
</comment>
<comment type="sequence caution" evidence="12">
    <conflict type="erroneous initiation">
        <sequence resource="EMBL-CDS" id="BAA83022"/>
    </conflict>
    <text>Extended N-terminus.</text>
</comment>
<comment type="sequence caution" evidence="12">
    <conflict type="erroneous initiation">
        <sequence resource="EMBL-CDS" id="BAC11039"/>
    </conflict>
    <text>Truncated N-terminus.</text>
</comment>
<name>NLGN1_HUMAN</name>
<accession>Q8N2Q7</accession>
<accession>D2X2H5</accession>
<accession>Q9UPT2</accession>
<sequence length="863" mass="96368">MALPRCTWPNYVWRAVMACLVHRGLGAPLTLCMLGCLLQAGHVLSQKLDDVDPLVATNFGKIRGIKKELNNEILGPVIQFLGVPYAAPPTGERRFQPPEPPSPWSDIRNATQFAPVCPQNIIDGRLPEVMLPVWFTNNLDVVSSYVQDQSEDCLYLNIYVPTEDVKRISKECARKPGKKICRKGGPLTKKQTDDLGDNDGAEDEDIRDSGGPKPVMVYIHGGSYMEGTGNLYDGSVLASYGNVIVITVNYRLGVLGFLSTGDQAAKGNYGLLDLIQALRWTSENIGFFGGDPLRITVFGSGAGGSCVNLLTLSHYSEGNRWSNSTKGLFQRAIAQSGTALSSWAVSFQPAKYARMLATKVGCNVSDTVELVECLQKKPYKELVDQDIQPARYHIAFGPVIDGDVIPDDPQILMEQGEFLNYDIMLGVNQGEGLKFVENIVDSDDGISASDFDFAVSNFVDNLYGYPEGKDVLRETIKFMYTDWADRHNPETRRKTLLALFTDHQWVAPAVATADLHSNFGSPTYFYAFYHHCQTDQVPAWADAAHGDEVPYVLGIPMIGPTELFPCNFSKNDVMLSAVVMTYWTNFAKTGDPNQPVPQDTKFIHTKPNRFEEVAWTRYSQKDQLYLHIGLKPRVKEHYRANKVNLWLELVPHLHNLNDISQYTSTTTKVPSTDITFRPTRKNSVPVTSAFPTAKQDDPKQQPSPFSVDQRDYSTELSVTIAVGASLLFLNILAFAALYYKKDKRRHDVHRRCSPQRTTTNDLTHAQEEEIMSLQMKHTDLDHECESIHPHEVVLRTACPPDYTLAMRRSPDDVPLMTPNTITMIPNTIPGIQPLHTFNTFTGGQNNTLPHPHPHPHSHSTTRV</sequence>
<organism>
    <name type="scientific">Homo sapiens</name>
    <name type="common">Human</name>
    <dbReference type="NCBI Taxonomy" id="9606"/>
    <lineage>
        <taxon>Eukaryota</taxon>
        <taxon>Metazoa</taxon>
        <taxon>Chordata</taxon>
        <taxon>Craniata</taxon>
        <taxon>Vertebrata</taxon>
        <taxon>Euteleostomi</taxon>
        <taxon>Mammalia</taxon>
        <taxon>Eutheria</taxon>
        <taxon>Euarchontoglires</taxon>
        <taxon>Primates</taxon>
        <taxon>Haplorrhini</taxon>
        <taxon>Catarrhini</taxon>
        <taxon>Hominidae</taxon>
        <taxon>Homo</taxon>
    </lineage>
</organism>
<keyword id="KW-0002">3D-structure</keyword>
<keyword id="KW-0025">Alternative splicing</keyword>
<keyword id="KW-1269">Autism</keyword>
<keyword id="KW-1268">Autism spectrum disorder</keyword>
<keyword id="KW-0090">Biological rhythms</keyword>
<keyword id="KW-0130">Cell adhesion</keyword>
<keyword id="KW-1003">Cell membrane</keyword>
<keyword id="KW-0225">Disease variant</keyword>
<keyword id="KW-1015">Disulfide bond</keyword>
<keyword id="KW-0325">Glycoprotein</keyword>
<keyword id="KW-0472">Membrane</keyword>
<keyword id="KW-1267">Proteomics identification</keyword>
<keyword id="KW-1185">Reference proteome</keyword>
<keyword id="KW-0964">Secreted</keyword>
<keyword id="KW-0732">Signal</keyword>
<keyword id="KW-0770">Synapse</keyword>
<keyword id="KW-0812">Transmembrane</keyword>
<keyword id="KW-1133">Transmembrane helix</keyword>
<reference key="1">
    <citation type="journal article" date="2010" name="Dev. Dyn.">
        <title>Characterization of the neuroligin gene family expression and evolution in zebrafish.</title>
        <authorList>
            <person name="Rissone A."/>
            <person name="Sangiorgio L."/>
            <person name="Monopoli M."/>
            <person name="Beltrame M."/>
            <person name="Zucchi I."/>
            <person name="Bussolino F."/>
            <person name="Arese M."/>
            <person name="Cotelli F."/>
        </authorList>
    </citation>
    <scope>NUCLEOTIDE SEQUENCE [MRNA] (ISOFORM 1)</scope>
</reference>
<reference key="2">
    <citation type="journal article" date="1999" name="DNA Res.">
        <title>Prediction of the coding sequences of unidentified human genes. XIV. The complete sequences of 100 new cDNA clones from brain which code for large proteins in vitro.</title>
        <authorList>
            <person name="Kikuno R."/>
            <person name="Nagase T."/>
            <person name="Ishikawa K."/>
            <person name="Hirosawa M."/>
            <person name="Miyajima N."/>
            <person name="Tanaka A."/>
            <person name="Kotani H."/>
            <person name="Nomura N."/>
            <person name="Ohara O."/>
        </authorList>
    </citation>
    <scope>NUCLEOTIDE SEQUENCE [LARGE SCALE MRNA] (ISOFORM 2)</scope>
    <source>
        <tissue>Brain</tissue>
    </source>
</reference>
<reference key="3">
    <citation type="journal article" date="2006" name="Nature">
        <title>The DNA sequence, annotation and analysis of human chromosome 3.</title>
        <authorList>
            <person name="Muzny D.M."/>
            <person name="Scherer S.E."/>
            <person name="Kaul R."/>
            <person name="Wang J."/>
            <person name="Yu J."/>
            <person name="Sudbrak R."/>
            <person name="Buhay C.J."/>
            <person name="Chen R."/>
            <person name="Cree A."/>
            <person name="Ding Y."/>
            <person name="Dugan-Rocha S."/>
            <person name="Gill R."/>
            <person name="Gunaratne P."/>
            <person name="Harris R.A."/>
            <person name="Hawes A.C."/>
            <person name="Hernandez J."/>
            <person name="Hodgson A.V."/>
            <person name="Hume J."/>
            <person name="Jackson A."/>
            <person name="Khan Z.M."/>
            <person name="Kovar-Smith C."/>
            <person name="Lewis L.R."/>
            <person name="Lozado R.J."/>
            <person name="Metzker M.L."/>
            <person name="Milosavljevic A."/>
            <person name="Miner G.R."/>
            <person name="Morgan M.B."/>
            <person name="Nazareth L.V."/>
            <person name="Scott G."/>
            <person name="Sodergren E."/>
            <person name="Song X.-Z."/>
            <person name="Steffen D."/>
            <person name="Wei S."/>
            <person name="Wheeler D.A."/>
            <person name="Wright M.W."/>
            <person name="Worley K.C."/>
            <person name="Yuan Y."/>
            <person name="Zhang Z."/>
            <person name="Adams C.Q."/>
            <person name="Ansari-Lari M.A."/>
            <person name="Ayele M."/>
            <person name="Brown M.J."/>
            <person name="Chen G."/>
            <person name="Chen Z."/>
            <person name="Clendenning J."/>
            <person name="Clerc-Blankenburg K.P."/>
            <person name="Chen R."/>
            <person name="Chen Z."/>
            <person name="Davis C."/>
            <person name="Delgado O."/>
            <person name="Dinh H.H."/>
            <person name="Dong W."/>
            <person name="Draper H."/>
            <person name="Ernst S."/>
            <person name="Fu G."/>
            <person name="Gonzalez-Garay M.L."/>
            <person name="Garcia D.K."/>
            <person name="Gillett W."/>
            <person name="Gu J."/>
            <person name="Hao B."/>
            <person name="Haugen E."/>
            <person name="Havlak P."/>
            <person name="He X."/>
            <person name="Hennig S."/>
            <person name="Hu S."/>
            <person name="Huang W."/>
            <person name="Jackson L.R."/>
            <person name="Jacob L.S."/>
            <person name="Kelly S.H."/>
            <person name="Kube M."/>
            <person name="Levy R."/>
            <person name="Li Z."/>
            <person name="Liu B."/>
            <person name="Liu J."/>
            <person name="Liu W."/>
            <person name="Lu J."/>
            <person name="Maheshwari M."/>
            <person name="Nguyen B.-V."/>
            <person name="Okwuonu G.O."/>
            <person name="Palmeiri A."/>
            <person name="Pasternak S."/>
            <person name="Perez L.M."/>
            <person name="Phelps K.A."/>
            <person name="Plopper F.J."/>
            <person name="Qiang B."/>
            <person name="Raymond C."/>
            <person name="Rodriguez R."/>
            <person name="Saenphimmachak C."/>
            <person name="Santibanez J."/>
            <person name="Shen H."/>
            <person name="Shen Y."/>
            <person name="Subramanian S."/>
            <person name="Tabor P.E."/>
            <person name="Verduzco D."/>
            <person name="Waldron L."/>
            <person name="Wang J."/>
            <person name="Wang J."/>
            <person name="Wang Q."/>
            <person name="Williams G.A."/>
            <person name="Wong G.K.-S."/>
            <person name="Yao Z."/>
            <person name="Zhang J."/>
            <person name="Zhang X."/>
            <person name="Zhao G."/>
            <person name="Zhou J."/>
            <person name="Zhou Y."/>
            <person name="Nelson D."/>
            <person name="Lehrach H."/>
            <person name="Reinhardt R."/>
            <person name="Naylor S.L."/>
            <person name="Yang H."/>
            <person name="Olson M."/>
            <person name="Weinstock G."/>
            <person name="Gibbs R.A."/>
        </authorList>
    </citation>
    <scope>NUCLEOTIDE SEQUENCE [LARGE SCALE GENOMIC DNA]</scope>
</reference>
<reference key="4">
    <citation type="journal article" date="2004" name="Genome Res.">
        <title>The status, quality, and expansion of the NIH full-length cDNA project: the Mammalian Gene Collection (MGC).</title>
        <authorList>
            <consortium name="The MGC Project Team"/>
        </authorList>
    </citation>
    <scope>NUCLEOTIDE SEQUENCE [LARGE SCALE MRNA] (ISOFORM 2)</scope>
    <source>
        <tissue>Duodenum</tissue>
    </source>
</reference>
<reference key="5">
    <citation type="journal article" date="2004" name="Nat. Genet.">
        <title>Complete sequencing and characterization of 21,243 full-length human cDNAs.</title>
        <authorList>
            <person name="Ota T."/>
            <person name="Suzuki Y."/>
            <person name="Nishikawa T."/>
            <person name="Otsuki T."/>
            <person name="Sugiyama T."/>
            <person name="Irie R."/>
            <person name="Wakamatsu A."/>
            <person name="Hayashi K."/>
            <person name="Sato H."/>
            <person name="Nagai K."/>
            <person name="Kimura K."/>
            <person name="Makita H."/>
            <person name="Sekine M."/>
            <person name="Obayashi M."/>
            <person name="Nishi T."/>
            <person name="Shibahara T."/>
            <person name="Tanaka T."/>
            <person name="Ishii S."/>
            <person name="Yamamoto J."/>
            <person name="Saito K."/>
            <person name="Kawai Y."/>
            <person name="Isono Y."/>
            <person name="Nakamura Y."/>
            <person name="Nagahari K."/>
            <person name="Murakami K."/>
            <person name="Yasuda T."/>
            <person name="Iwayanagi T."/>
            <person name="Wagatsuma M."/>
            <person name="Shiratori A."/>
            <person name="Sudo H."/>
            <person name="Hosoiri T."/>
            <person name="Kaku Y."/>
            <person name="Kodaira H."/>
            <person name="Kondo H."/>
            <person name="Sugawara M."/>
            <person name="Takahashi M."/>
            <person name="Kanda K."/>
            <person name="Yokoi T."/>
            <person name="Furuya T."/>
            <person name="Kikkawa E."/>
            <person name="Omura Y."/>
            <person name="Abe K."/>
            <person name="Kamihara K."/>
            <person name="Katsuta N."/>
            <person name="Sato K."/>
            <person name="Tanikawa M."/>
            <person name="Yamazaki M."/>
            <person name="Ninomiya K."/>
            <person name="Ishibashi T."/>
            <person name="Yamashita H."/>
            <person name="Murakawa K."/>
            <person name="Fujimori K."/>
            <person name="Tanai H."/>
            <person name="Kimata M."/>
            <person name="Watanabe M."/>
            <person name="Hiraoka S."/>
            <person name="Chiba Y."/>
            <person name="Ishida S."/>
            <person name="Ono Y."/>
            <person name="Takiguchi S."/>
            <person name="Watanabe S."/>
            <person name="Yosida M."/>
            <person name="Hotuta T."/>
            <person name="Kusano J."/>
            <person name="Kanehori K."/>
            <person name="Takahashi-Fujii A."/>
            <person name="Hara H."/>
            <person name="Tanase T.-O."/>
            <person name="Nomura Y."/>
            <person name="Togiya S."/>
            <person name="Komai F."/>
            <person name="Hara R."/>
            <person name="Takeuchi K."/>
            <person name="Arita M."/>
            <person name="Imose N."/>
            <person name="Musashino K."/>
            <person name="Yuuki H."/>
            <person name="Oshima A."/>
            <person name="Sasaki N."/>
            <person name="Aotsuka S."/>
            <person name="Yoshikawa Y."/>
            <person name="Matsunawa H."/>
            <person name="Ichihara T."/>
            <person name="Shiohata N."/>
            <person name="Sano S."/>
            <person name="Moriya S."/>
            <person name="Momiyama H."/>
            <person name="Satoh N."/>
            <person name="Takami S."/>
            <person name="Terashima Y."/>
            <person name="Suzuki O."/>
            <person name="Nakagawa S."/>
            <person name="Senoh A."/>
            <person name="Mizoguchi H."/>
            <person name="Goto Y."/>
            <person name="Shimizu F."/>
            <person name="Wakebe H."/>
            <person name="Hishigaki H."/>
            <person name="Watanabe T."/>
            <person name="Sugiyama A."/>
            <person name="Takemoto M."/>
            <person name="Kawakami B."/>
            <person name="Yamazaki M."/>
            <person name="Watanabe K."/>
            <person name="Kumagai A."/>
            <person name="Itakura S."/>
            <person name="Fukuzumi Y."/>
            <person name="Fujimori Y."/>
            <person name="Komiyama M."/>
            <person name="Tashiro H."/>
            <person name="Tanigami A."/>
            <person name="Fujiwara T."/>
            <person name="Ono T."/>
            <person name="Yamada K."/>
            <person name="Fujii Y."/>
            <person name="Ozaki K."/>
            <person name="Hirao M."/>
            <person name="Ohmori Y."/>
            <person name="Kawabata A."/>
            <person name="Hikiji T."/>
            <person name="Kobatake N."/>
            <person name="Inagaki H."/>
            <person name="Ikema Y."/>
            <person name="Okamoto S."/>
            <person name="Okitani R."/>
            <person name="Kawakami T."/>
            <person name="Noguchi S."/>
            <person name="Itoh T."/>
            <person name="Shigeta K."/>
            <person name="Senba T."/>
            <person name="Matsumura K."/>
            <person name="Nakajima Y."/>
            <person name="Mizuno T."/>
            <person name="Morinaga M."/>
            <person name="Sasaki M."/>
            <person name="Togashi T."/>
            <person name="Oyama M."/>
            <person name="Hata H."/>
            <person name="Watanabe M."/>
            <person name="Komatsu T."/>
            <person name="Mizushima-Sugano J."/>
            <person name="Satoh T."/>
            <person name="Shirai Y."/>
            <person name="Takahashi Y."/>
            <person name="Nakagawa K."/>
            <person name="Okumura K."/>
            <person name="Nagase T."/>
            <person name="Nomura N."/>
            <person name="Kikuchi H."/>
            <person name="Masuho Y."/>
            <person name="Yamashita R."/>
            <person name="Nakai K."/>
            <person name="Yada T."/>
            <person name="Nakamura Y."/>
            <person name="Ohara O."/>
            <person name="Isogai T."/>
            <person name="Sugano S."/>
        </authorList>
    </citation>
    <scope>NUCLEOTIDE SEQUENCE [LARGE SCALE MRNA] OF 330-840 (ISOFORMS 1/2)</scope>
    <source>
        <tissue>Embryo</tissue>
    </source>
</reference>
<reference key="6">
    <citation type="journal article" date="1997" name="Science">
        <title>Binding of neuroligins to PSD-95.</title>
        <authorList>
            <person name="Irie M."/>
            <person name="Hata Y."/>
            <person name="Takeuchi M."/>
            <person name="Ichtchenko K."/>
            <person name="Toyoda A."/>
            <person name="Hirao K."/>
            <person name="Takai Y."/>
            <person name="Rosahl T.W."/>
            <person name="Suedhof T.C."/>
        </authorList>
    </citation>
    <scope>INTERACTION WITH DLG4</scope>
</reference>
<reference key="7">
    <citation type="journal article" date="2006" name="Protein Sci.">
        <title>Solution structure of GOPC PDZ domain and its interaction with the C-terminal motif of neuroligin.</title>
        <authorList>
            <person name="Li X."/>
            <person name="Zhang J."/>
            <person name="Cao Z."/>
            <person name="Wu J."/>
            <person name="Shi Y."/>
        </authorList>
    </citation>
    <scope>INTERACTION WITH GOPC</scope>
</reference>
<reference key="8">
    <citation type="journal article" date="2008" name="Endocrinology">
        <title>Expression of neurexin, neuroligin, and their cytoplasmic binding partners in the pancreatic beta-cells and the involvement of neuroligin in insulin secretion.</title>
        <authorList>
            <person name="Suckow A.T."/>
            <person name="Comoletti D."/>
            <person name="Waldrop M.A."/>
            <person name="Mosedale M."/>
            <person name="Egodage S."/>
            <person name="Taylor P."/>
            <person name="Chessler S.D."/>
        </authorList>
    </citation>
    <scope>TISSUE SPECIFICITY</scope>
    <scope>ALTERNATIVE SPLICING</scope>
</reference>
<reference key="9">
    <citation type="journal article" date="2009" name="Proc. Natl. Acad. Sci. U.S.A.">
        <title>The synaptic proteins neurexins and neuroligins are widely expressed in the vascular system and contribute to its functions.</title>
        <authorList>
            <person name="Bottos A."/>
            <person name="Destro E."/>
            <person name="Rissone A."/>
            <person name="Graziano S."/>
            <person name="Cordara G."/>
            <person name="Assenzio B."/>
            <person name="Cera M.R."/>
            <person name="Mascia L."/>
            <person name="Bussolino F."/>
            <person name="Arese M."/>
        </authorList>
    </citation>
    <scope>TISSUE SPECIFICITY</scope>
</reference>
<reference key="10">
    <citation type="journal article" date="2017" name="PLoS Genet.">
        <title>Functional significance of rare neuroligin 1 variants found in autism.</title>
        <authorList>
            <person name="Nakanishi M."/>
            <person name="Nomura J."/>
            <person name="Ji X."/>
            <person name="Tamada K."/>
            <person name="Arai T."/>
            <person name="Takahashi E."/>
            <person name="Bucan M."/>
            <person name="Takumi T."/>
        </authorList>
    </citation>
    <scope>FUNCTION</scope>
    <scope>SUBCELLULAR LOCATION</scope>
    <scope>TISSUE SPECIFICITY</scope>
    <scope>VARIANTS AUTS20 LEU-89; ILE-90; PRO-309; GLU-337 AND TYR-835</scope>
    <scope>VARIANT HIS-756</scope>
    <scope>CHARACTERIZATION OF VARIANTS AUTS20 LEU-89; ILE-90; PRO-309; GLU-337 AND TYR-835</scope>
    <scope>CHARACTERIZATION OF VARIANT HIS-756</scope>
</reference>
<reference key="11">
    <citation type="journal article" date="2017" name="PLoS Genet.">
        <title>Correction: Functional significance of rare neuroligin 1 variants found in autism.</title>
        <authorList>
            <person name="Nakanishi M."/>
            <person name="Nomura J."/>
            <person name="Ji X."/>
            <person name="Tamada K."/>
            <person name="Arai T."/>
            <person name="Takahashi E."/>
            <person name="Bucan M."/>
            <person name="Takumi T."/>
        </authorList>
    </citation>
    <scope>ERRATUM OF PUBMED:28841651</scope>
</reference>
<reference key="12">
    <citation type="journal article" date="2019" name="Clin. Genet.">
        <title>A novel nonsense homozygous variant in the NLGN1 gene found in a pair of monozygotic twin brothers with intellectual disability and autism.</title>
        <authorList>
            <person name="Tejada M.I."/>
            <person name="Elcoroaristizabal X."/>
            <person name="Ibarluzea N."/>
            <person name="Botella M.P."/>
            <person name="de la Hoz A.B."/>
            <person name="Ocio I."/>
        </authorList>
    </citation>
    <scope>VARIANT 25-LEU--VAL-863 DEL</scope>
</reference>
<proteinExistence type="evidence at protein level"/>
<gene>
    <name type="primary">NLGN1</name>
    <name type="synonym">KIAA1070</name>
</gene>
<protein>
    <recommendedName>
        <fullName>Neuroligin-1</fullName>
    </recommendedName>
</protein>
<feature type="signal peptide" evidence="4">
    <location>
        <begin position="1"/>
        <end position="45"/>
    </location>
</feature>
<feature type="chain" id="PRO_0000008640" description="Neuroligin-1">
    <location>
        <begin position="46"/>
        <end position="863"/>
    </location>
</feature>
<feature type="topological domain" description="Extracellular" evidence="4">
    <location>
        <begin position="46"/>
        <end position="717"/>
    </location>
</feature>
<feature type="transmembrane region" description="Helical" evidence="4">
    <location>
        <begin position="718"/>
        <end position="738"/>
    </location>
</feature>
<feature type="topological domain" description="Cytoplasmic" evidence="4">
    <location>
        <begin position="739"/>
        <end position="863"/>
    </location>
</feature>
<feature type="region of interest" description="Disordered" evidence="5">
    <location>
        <begin position="183"/>
        <end position="212"/>
    </location>
</feature>
<feature type="region of interest" description="Disordered" evidence="5">
    <location>
        <begin position="670"/>
        <end position="708"/>
    </location>
</feature>
<feature type="region of interest" description="Disordered" evidence="5">
    <location>
        <begin position="842"/>
        <end position="863"/>
    </location>
</feature>
<feature type="compositionally biased region" description="Acidic residues" evidence="5">
    <location>
        <begin position="194"/>
        <end position="206"/>
    </location>
</feature>
<feature type="compositionally biased region" description="Polar residues" evidence="5">
    <location>
        <begin position="681"/>
        <end position="690"/>
    </location>
</feature>
<feature type="compositionally biased region" description="Basic residues" evidence="5">
    <location>
        <begin position="851"/>
        <end position="863"/>
    </location>
</feature>
<feature type="glycosylation site" description="N-linked (GlcNAc...) (complex) asparagine" evidence="1">
    <location>
        <position position="109"/>
    </location>
</feature>
<feature type="glycosylation site" description="N-linked (GlcNAc...) (complex) asparagine" evidence="1">
    <location>
        <position position="323"/>
    </location>
</feature>
<feature type="glycosylation site" description="N-linked (GlcNAc...) (complex) asparagine" evidence="1">
    <location>
        <position position="363"/>
    </location>
</feature>
<feature type="glycosylation site" description="N-linked (GlcNAc...) asparagine" evidence="1">
    <location>
        <position position="567"/>
    </location>
</feature>
<feature type="glycosylation site" description="O-linked (GalNAc...) serine" evidence="1">
    <location>
        <position position="703"/>
    </location>
</feature>
<feature type="glycosylation site" description="O-linked (GalNAc...) serine" evidence="1">
    <location>
        <position position="706"/>
    </location>
</feature>
<feature type="disulfide bond" evidence="1">
    <location>
        <begin position="117"/>
        <end position="153"/>
    </location>
</feature>
<feature type="disulfide bond" evidence="1">
    <location>
        <begin position="362"/>
        <end position="373"/>
    </location>
</feature>
<feature type="disulfide bond" evidence="1">
    <location>
        <begin position="532"/>
        <end position="566"/>
    </location>
</feature>
<feature type="splice variant" id="VSP_060231" description="In isoform 2.">
    <location>
        <begin position="165"/>
        <end position="204"/>
    </location>
</feature>
<feature type="sequence variant" id="VAR_084195" description="In AUTS20; uncertain significance." evidence="10">
    <location>
        <begin position="25"/>
        <end position="863"/>
    </location>
</feature>
<feature type="sequence variant" id="VAR_084196" description="In AUTS20; risk factor for disease development; decreased function in dendritic spine formation; decreased protein abundance; does not localize to the plasma membrane but is retained in the endoplasmic reticulum; dbSNP:rs1751123722." evidence="9">
    <original>P</original>
    <variation>L</variation>
    <location>
        <position position="89"/>
    </location>
</feature>
<feature type="sequence variant" id="VAR_084197" description="In AUTS20; uncertain significance; does not affect dendritic spine formation; no effect on protein abundance; no effect on subcellular localization; dbSNP:rs145279213." evidence="9">
    <original>T</original>
    <variation>I</variation>
    <location>
        <position position="90"/>
    </location>
</feature>
<feature type="sequence variant" id="VAR_084198" description="In AUTS20; risk factor for disease development; decreased function in dendritic spine formation; decreased protein abundance; does not localize to the plasma membrane but is retained in the endoplasmic reticulum; dbSNP:rs1750373491." evidence="9">
    <original>L</original>
    <variation>P</variation>
    <location>
        <position position="309"/>
    </location>
</feature>
<feature type="sequence variant" id="VAR_084199" description="In AUTS20; risk factor for disease development; decreased function in dendritic spine formation; decreased protein abundance; does not localize to the plasma membrane but is retained in the endoplasmic reticulum; dbSNP:rs1751075634." evidence="9">
    <original>G</original>
    <variation>E</variation>
    <location>
        <position position="337"/>
    </location>
</feature>
<feature type="sequence variant" id="VAR_084200" description="Does not affect dendritic spine formation; does not affect localization to plasma membrane; dbSNP:rs118079207." evidence="9">
    <original>R</original>
    <variation>H</variation>
    <location>
        <position position="756"/>
    </location>
</feature>
<feature type="sequence variant" id="VAR_084201" description="In AUTS20; risk factor for disease development; decreased function in dendritic spine formation; decreased protein abundance; does not affect subcellular location." evidence="9">
    <original>H</original>
    <variation>Y</variation>
    <location>
        <position position="835"/>
    </location>
</feature>
<feature type="sequence conflict" description="In Ref. 5; BAC11039." evidence="12" ref="5">
    <original>F</original>
    <variation>L</variation>
    <location>
        <position position="734"/>
    </location>
</feature>
<feature type="strand" evidence="14">
    <location>
        <begin position="54"/>
        <end position="57"/>
    </location>
</feature>
<feature type="strand" evidence="14">
    <location>
        <begin position="60"/>
        <end position="63"/>
    </location>
</feature>
<feature type="strand" evidence="14">
    <location>
        <begin position="65"/>
        <end position="67"/>
    </location>
</feature>
<feature type="strand" evidence="13">
    <location>
        <begin position="72"/>
        <end position="74"/>
    </location>
</feature>
<feature type="strand" evidence="14">
    <location>
        <begin position="77"/>
        <end position="84"/>
    </location>
</feature>
<feature type="helix" evidence="14">
    <location>
        <begin position="91"/>
        <end position="93"/>
    </location>
</feature>
<feature type="strand" evidence="14">
    <location>
        <begin position="105"/>
        <end position="109"/>
    </location>
</feature>
<feature type="strand" evidence="13">
    <location>
        <begin position="122"/>
        <end position="125"/>
    </location>
</feature>
<feature type="turn" evidence="14">
    <location>
        <begin position="128"/>
        <end position="130"/>
    </location>
</feature>
<feature type="helix" evidence="14">
    <location>
        <begin position="133"/>
        <end position="137"/>
    </location>
</feature>
<feature type="helix" evidence="14">
    <location>
        <begin position="139"/>
        <end position="144"/>
    </location>
</feature>
<feature type="strand" evidence="14">
    <location>
        <begin position="147"/>
        <end position="149"/>
    </location>
</feature>
<feature type="strand" evidence="14">
    <location>
        <begin position="155"/>
        <end position="160"/>
    </location>
</feature>
<feature type="strand" evidence="14">
    <location>
        <begin position="213"/>
        <end position="218"/>
    </location>
</feature>
<feature type="strand" evidence="14">
    <location>
        <begin position="222"/>
        <end position="226"/>
    </location>
</feature>
<feature type="helix" evidence="14">
    <location>
        <begin position="229"/>
        <end position="231"/>
    </location>
</feature>
<feature type="helix" evidence="14">
    <location>
        <begin position="235"/>
        <end position="241"/>
    </location>
</feature>
<feature type="strand" evidence="14">
    <location>
        <begin position="243"/>
        <end position="248"/>
    </location>
</feature>
<feature type="helix" evidence="14">
    <location>
        <begin position="253"/>
        <end position="257"/>
    </location>
</feature>
<feature type="strand" evidence="14">
    <location>
        <begin position="261"/>
        <end position="264"/>
    </location>
</feature>
<feature type="helix" evidence="14">
    <location>
        <begin position="269"/>
        <end position="284"/>
    </location>
</feature>
<feature type="helix" evidence="14">
    <location>
        <begin position="285"/>
        <end position="288"/>
    </location>
</feature>
<feature type="strand" evidence="14">
    <location>
        <begin position="290"/>
        <end position="300"/>
    </location>
</feature>
<feature type="helix" evidence="14">
    <location>
        <begin position="302"/>
        <end position="311"/>
    </location>
</feature>
<feature type="helix" evidence="14">
    <location>
        <begin position="314"/>
        <end position="316"/>
    </location>
</feature>
<feature type="strand" evidence="14">
    <location>
        <begin position="327"/>
        <end position="336"/>
    </location>
</feature>
<feature type="strand" evidence="14">
    <location>
        <begin position="339"/>
        <end position="341"/>
    </location>
</feature>
<feature type="helix" evidence="14">
    <location>
        <begin position="349"/>
        <end position="359"/>
    </location>
</feature>
<feature type="helix" evidence="14">
    <location>
        <begin position="367"/>
        <end position="374"/>
    </location>
</feature>
<feature type="helix" evidence="14">
    <location>
        <begin position="379"/>
        <end position="383"/>
    </location>
</feature>
<feature type="strand" evidence="14">
    <location>
        <begin position="395"/>
        <end position="397"/>
    </location>
</feature>
<feature type="strand" evidence="14">
    <location>
        <begin position="402"/>
        <end position="405"/>
    </location>
</feature>
<feature type="helix" evidence="14">
    <location>
        <begin position="409"/>
        <end position="414"/>
    </location>
</feature>
<feature type="strand" evidence="14">
    <location>
        <begin position="422"/>
        <end position="428"/>
    </location>
</feature>
<feature type="turn" evidence="14">
    <location>
        <begin position="429"/>
        <end position="432"/>
    </location>
</feature>
<feature type="helix" evidence="14">
    <location>
        <begin position="433"/>
        <end position="436"/>
    </location>
</feature>
<feature type="turn" evidence="14">
    <location>
        <begin position="437"/>
        <end position="439"/>
    </location>
</feature>
<feature type="strand" evidence="14">
    <location>
        <begin position="442"/>
        <end position="444"/>
    </location>
</feature>
<feature type="helix" evidence="14">
    <location>
        <begin position="448"/>
        <end position="462"/>
    </location>
</feature>
<feature type="strand" evidence="13">
    <location>
        <begin position="466"/>
        <end position="468"/>
    </location>
</feature>
<feature type="helix" evidence="14">
    <location>
        <begin position="469"/>
        <end position="479"/>
    </location>
</feature>
<feature type="helix" evidence="14">
    <location>
        <begin position="483"/>
        <end position="485"/>
    </location>
</feature>
<feature type="helix" evidence="14">
    <location>
        <begin position="489"/>
        <end position="504"/>
    </location>
</feature>
<feature type="helix" evidence="14">
    <location>
        <begin position="506"/>
        <end position="518"/>
    </location>
</feature>
<feature type="strand" evidence="14">
    <location>
        <begin position="523"/>
        <end position="528"/>
    </location>
</feature>
<feature type="turn" evidence="14">
    <location>
        <begin position="545"/>
        <end position="548"/>
    </location>
</feature>
<feature type="helix" evidence="14">
    <location>
        <begin position="549"/>
        <end position="553"/>
    </location>
</feature>
<feature type="helix" evidence="14">
    <location>
        <begin position="555"/>
        <end position="558"/>
    </location>
</feature>
<feature type="strand" evidence="14">
    <location>
        <begin position="562"/>
        <end position="564"/>
    </location>
</feature>
<feature type="helix" evidence="14">
    <location>
        <begin position="570"/>
        <end position="589"/>
    </location>
</feature>
<feature type="strand" evidence="13">
    <location>
        <begin position="594"/>
        <end position="596"/>
    </location>
</feature>
<feature type="turn" evidence="13">
    <location>
        <begin position="609"/>
        <end position="612"/>
    </location>
</feature>
<feature type="turn" evidence="14">
    <location>
        <begin position="620"/>
        <end position="622"/>
    </location>
</feature>
<feature type="strand" evidence="14">
    <location>
        <begin position="624"/>
        <end position="631"/>
    </location>
</feature>
<feature type="strand" evidence="14">
    <location>
        <begin position="633"/>
        <end position="637"/>
    </location>
</feature>
<feature type="helix" evidence="14">
    <location>
        <begin position="640"/>
        <end position="647"/>
    </location>
</feature>
<feature type="helix" evidence="14">
    <location>
        <begin position="649"/>
        <end position="652"/>
    </location>
</feature>
<feature type="turn" evidence="13">
    <location>
        <begin position="653"/>
        <end position="655"/>
    </location>
</feature>